<sequence>MKKYVIVTGGVLSGIGKGIFSASLARLMKEHGVDVNVLKIDPYLNVDAGTMNPNQHGEVFVTEDGYEADLDLGHYERFLGRDMTRQNNMTAGQVYLRVIEKERQGKYLGNTVQIVPHLTEEIKDRIRALEAELLVVEIGGTVGDIEGEVFLEAVRELQMEEGKENFLFAHVTYVPYLRTTNEFKTKPTQQSVQLLRRIGITPDMVIVRSEFPLDVPSMNKVALFSGVPRDFVINLPDTKNVYEVPEILRDMGLHEKIASKLNVELKKSTFNWSYPKAFKPYRIALVGKYLGTDDAYKSIIESVFLTGIEKPTVVDSQMLEDMNDEEVKKVLDEYDALIIPGGFGRRGVEGKIKAIKYARENKKPILGICLGMQLMVIEFARNVFGYKEANSTEFDPNTPYPVVDLMEEQKRILKLGGTMRLGAQKVKIFPKTKLYEVYGGVEEVYERHRHRYEANEEAFPELFKKPGEEGYKLVVSAKSDFIEAVELEDHPFFVGVQFHPEYKSKVGAPHPIFVYLRKVLEGSQ</sequence>
<gene>
    <name evidence="1" type="primary">pyrG</name>
    <name type="ordered locus">TM_0803</name>
</gene>
<comment type="function">
    <text evidence="1">Catalyzes the ATP-dependent amination of UTP to CTP with either L-glutamine or ammonia as the source of nitrogen. Regulates intracellular CTP levels through interactions with the four ribonucleotide triphosphates.</text>
</comment>
<comment type="catalytic activity">
    <reaction evidence="1">
        <text>UTP + L-glutamine + ATP + H2O = CTP + L-glutamate + ADP + phosphate + 2 H(+)</text>
        <dbReference type="Rhea" id="RHEA:26426"/>
        <dbReference type="ChEBI" id="CHEBI:15377"/>
        <dbReference type="ChEBI" id="CHEBI:15378"/>
        <dbReference type="ChEBI" id="CHEBI:29985"/>
        <dbReference type="ChEBI" id="CHEBI:30616"/>
        <dbReference type="ChEBI" id="CHEBI:37563"/>
        <dbReference type="ChEBI" id="CHEBI:43474"/>
        <dbReference type="ChEBI" id="CHEBI:46398"/>
        <dbReference type="ChEBI" id="CHEBI:58359"/>
        <dbReference type="ChEBI" id="CHEBI:456216"/>
        <dbReference type="EC" id="6.3.4.2"/>
    </reaction>
</comment>
<comment type="catalytic activity">
    <reaction evidence="1">
        <text>L-glutamine + H2O = L-glutamate + NH4(+)</text>
        <dbReference type="Rhea" id="RHEA:15889"/>
        <dbReference type="ChEBI" id="CHEBI:15377"/>
        <dbReference type="ChEBI" id="CHEBI:28938"/>
        <dbReference type="ChEBI" id="CHEBI:29985"/>
        <dbReference type="ChEBI" id="CHEBI:58359"/>
    </reaction>
</comment>
<comment type="catalytic activity">
    <reaction evidence="1">
        <text>UTP + NH4(+) + ATP = CTP + ADP + phosphate + 2 H(+)</text>
        <dbReference type="Rhea" id="RHEA:16597"/>
        <dbReference type="ChEBI" id="CHEBI:15378"/>
        <dbReference type="ChEBI" id="CHEBI:28938"/>
        <dbReference type="ChEBI" id="CHEBI:30616"/>
        <dbReference type="ChEBI" id="CHEBI:37563"/>
        <dbReference type="ChEBI" id="CHEBI:43474"/>
        <dbReference type="ChEBI" id="CHEBI:46398"/>
        <dbReference type="ChEBI" id="CHEBI:456216"/>
    </reaction>
</comment>
<comment type="activity regulation">
    <text evidence="1">Allosterically activated by GTP, when glutamine is the substrate; GTP has no effect on the reaction when ammonia is the substrate. The allosteric effector GTP functions by stabilizing the protein conformation that binds the tetrahedral intermediate(s) formed during glutamine hydrolysis. Inhibited by the product CTP, via allosteric rather than competitive inhibition.</text>
</comment>
<comment type="pathway">
    <text evidence="1">Pyrimidine metabolism; CTP biosynthesis via de novo pathway; CTP from UDP: step 2/2.</text>
</comment>
<comment type="subunit">
    <text evidence="1">Homotetramer.</text>
</comment>
<comment type="miscellaneous">
    <text evidence="1">CTPSs have evolved a hybrid strategy for distinguishing between UTP and CTP. The overlapping regions of the product feedback inhibitory and substrate sites recognize a common feature in both compounds, the triphosphate moiety. To differentiate isosteric substrate and product pyrimidine rings, an additional pocket far from the expected kinase/ligase catalytic site, specifically recognizes the cytosine and ribose portions of the product inhibitor.</text>
</comment>
<comment type="similarity">
    <text evidence="1">Belongs to the CTP synthase family.</text>
</comment>
<dbReference type="EC" id="6.3.4.2" evidence="1"/>
<dbReference type="EMBL" id="AE000512">
    <property type="protein sequence ID" value="AAD35885.1"/>
    <property type="molecule type" value="Genomic_DNA"/>
</dbReference>
<dbReference type="PIR" id="D72330">
    <property type="entry name" value="D72330"/>
</dbReference>
<dbReference type="RefSeq" id="NP_228612.1">
    <property type="nucleotide sequence ID" value="NC_000853.1"/>
</dbReference>
<dbReference type="RefSeq" id="WP_004080860.1">
    <property type="nucleotide sequence ID" value="NZ_CP011107.1"/>
</dbReference>
<dbReference type="SMR" id="Q9WZR0"/>
<dbReference type="FunCoup" id="Q9WZR0">
    <property type="interactions" value="381"/>
</dbReference>
<dbReference type="STRING" id="243274.TM_0803"/>
<dbReference type="MEROPS" id="C26.964"/>
<dbReference type="PaxDb" id="243274-THEMA_00635"/>
<dbReference type="EnsemblBacteria" id="AAD35885">
    <property type="protein sequence ID" value="AAD35885"/>
    <property type="gene ID" value="TM_0803"/>
</dbReference>
<dbReference type="KEGG" id="tma:TM0803"/>
<dbReference type="KEGG" id="tmi:THEMA_00635"/>
<dbReference type="KEGG" id="tmm:Tmari_0804"/>
<dbReference type="KEGG" id="tmw:THMA_0822"/>
<dbReference type="eggNOG" id="COG0504">
    <property type="taxonomic scope" value="Bacteria"/>
</dbReference>
<dbReference type="InParanoid" id="Q9WZR0"/>
<dbReference type="OrthoDB" id="9801107at2"/>
<dbReference type="UniPathway" id="UPA00159">
    <property type="reaction ID" value="UER00277"/>
</dbReference>
<dbReference type="Proteomes" id="UP000008183">
    <property type="component" value="Chromosome"/>
</dbReference>
<dbReference type="GO" id="GO:0005829">
    <property type="term" value="C:cytosol"/>
    <property type="evidence" value="ECO:0000318"/>
    <property type="project" value="GO_Central"/>
</dbReference>
<dbReference type="GO" id="GO:0005524">
    <property type="term" value="F:ATP binding"/>
    <property type="evidence" value="ECO:0007669"/>
    <property type="project" value="UniProtKB-KW"/>
</dbReference>
<dbReference type="GO" id="GO:0003883">
    <property type="term" value="F:CTP synthase activity"/>
    <property type="evidence" value="ECO:0000318"/>
    <property type="project" value="GO_Central"/>
</dbReference>
<dbReference type="GO" id="GO:0004359">
    <property type="term" value="F:glutaminase activity"/>
    <property type="evidence" value="ECO:0007669"/>
    <property type="project" value="RHEA"/>
</dbReference>
<dbReference type="GO" id="GO:0042802">
    <property type="term" value="F:identical protein binding"/>
    <property type="evidence" value="ECO:0000318"/>
    <property type="project" value="GO_Central"/>
</dbReference>
<dbReference type="GO" id="GO:0046872">
    <property type="term" value="F:metal ion binding"/>
    <property type="evidence" value="ECO:0007669"/>
    <property type="project" value="UniProtKB-KW"/>
</dbReference>
<dbReference type="GO" id="GO:0044210">
    <property type="term" value="P:'de novo' CTP biosynthetic process"/>
    <property type="evidence" value="ECO:0007669"/>
    <property type="project" value="UniProtKB-UniRule"/>
</dbReference>
<dbReference type="GO" id="GO:0006241">
    <property type="term" value="P:CTP biosynthetic process"/>
    <property type="evidence" value="ECO:0000318"/>
    <property type="project" value="GO_Central"/>
</dbReference>
<dbReference type="GO" id="GO:0019856">
    <property type="term" value="P:pyrimidine nucleobase biosynthetic process"/>
    <property type="evidence" value="ECO:0000318"/>
    <property type="project" value="GO_Central"/>
</dbReference>
<dbReference type="CDD" id="cd03113">
    <property type="entry name" value="CTPS_N"/>
    <property type="match status" value="1"/>
</dbReference>
<dbReference type="CDD" id="cd01746">
    <property type="entry name" value="GATase1_CTP_Synthase"/>
    <property type="match status" value="1"/>
</dbReference>
<dbReference type="FunFam" id="3.40.50.300:FF:000009">
    <property type="entry name" value="CTP synthase"/>
    <property type="match status" value="1"/>
</dbReference>
<dbReference type="FunFam" id="3.40.50.880:FF:000002">
    <property type="entry name" value="CTP synthase"/>
    <property type="match status" value="1"/>
</dbReference>
<dbReference type="Gene3D" id="3.40.50.880">
    <property type="match status" value="1"/>
</dbReference>
<dbReference type="Gene3D" id="3.40.50.300">
    <property type="entry name" value="P-loop containing nucleotide triphosphate hydrolases"/>
    <property type="match status" value="1"/>
</dbReference>
<dbReference type="HAMAP" id="MF_01227">
    <property type="entry name" value="PyrG"/>
    <property type="match status" value="1"/>
</dbReference>
<dbReference type="InterPro" id="IPR029062">
    <property type="entry name" value="Class_I_gatase-like"/>
</dbReference>
<dbReference type="InterPro" id="IPR004468">
    <property type="entry name" value="CTP_synthase"/>
</dbReference>
<dbReference type="InterPro" id="IPR017456">
    <property type="entry name" value="CTP_synthase_N"/>
</dbReference>
<dbReference type="InterPro" id="IPR017926">
    <property type="entry name" value="GATASE"/>
</dbReference>
<dbReference type="InterPro" id="IPR033828">
    <property type="entry name" value="GATase1_CTP_Synthase"/>
</dbReference>
<dbReference type="InterPro" id="IPR027417">
    <property type="entry name" value="P-loop_NTPase"/>
</dbReference>
<dbReference type="NCBIfam" id="NF003792">
    <property type="entry name" value="PRK05380.1"/>
    <property type="match status" value="1"/>
</dbReference>
<dbReference type="NCBIfam" id="TIGR00337">
    <property type="entry name" value="PyrG"/>
    <property type="match status" value="1"/>
</dbReference>
<dbReference type="PANTHER" id="PTHR11550">
    <property type="entry name" value="CTP SYNTHASE"/>
    <property type="match status" value="1"/>
</dbReference>
<dbReference type="PANTHER" id="PTHR11550:SF0">
    <property type="entry name" value="CTP SYNTHASE-RELATED"/>
    <property type="match status" value="1"/>
</dbReference>
<dbReference type="Pfam" id="PF06418">
    <property type="entry name" value="CTP_synth_N"/>
    <property type="match status" value="1"/>
</dbReference>
<dbReference type="Pfam" id="PF00117">
    <property type="entry name" value="GATase"/>
    <property type="match status" value="1"/>
</dbReference>
<dbReference type="SUPFAM" id="SSF52317">
    <property type="entry name" value="Class I glutamine amidotransferase-like"/>
    <property type="match status" value="1"/>
</dbReference>
<dbReference type="SUPFAM" id="SSF52540">
    <property type="entry name" value="P-loop containing nucleoside triphosphate hydrolases"/>
    <property type="match status" value="1"/>
</dbReference>
<dbReference type="PROSITE" id="PS51273">
    <property type="entry name" value="GATASE_TYPE_1"/>
    <property type="match status" value="1"/>
</dbReference>
<keyword id="KW-0067">ATP-binding</keyword>
<keyword id="KW-0315">Glutamine amidotransferase</keyword>
<keyword id="KW-0436">Ligase</keyword>
<keyword id="KW-0460">Magnesium</keyword>
<keyword id="KW-0479">Metal-binding</keyword>
<keyword id="KW-0547">Nucleotide-binding</keyword>
<keyword id="KW-0665">Pyrimidine biosynthesis</keyword>
<keyword id="KW-1185">Reference proteome</keyword>
<reference key="1">
    <citation type="journal article" date="1999" name="Nature">
        <title>Evidence for lateral gene transfer between Archaea and Bacteria from genome sequence of Thermotoga maritima.</title>
        <authorList>
            <person name="Nelson K.E."/>
            <person name="Clayton R.A."/>
            <person name="Gill S.R."/>
            <person name="Gwinn M.L."/>
            <person name="Dodson R.J."/>
            <person name="Haft D.H."/>
            <person name="Hickey E.K."/>
            <person name="Peterson J.D."/>
            <person name="Nelson W.C."/>
            <person name="Ketchum K.A."/>
            <person name="McDonald L.A."/>
            <person name="Utterback T.R."/>
            <person name="Malek J.A."/>
            <person name="Linher K.D."/>
            <person name="Garrett M.M."/>
            <person name="Stewart A.M."/>
            <person name="Cotton M.D."/>
            <person name="Pratt M.S."/>
            <person name="Phillips C.A."/>
            <person name="Richardson D.L."/>
            <person name="Heidelberg J.F."/>
            <person name="Sutton G.G."/>
            <person name="Fleischmann R.D."/>
            <person name="Eisen J.A."/>
            <person name="White O."/>
            <person name="Salzberg S.L."/>
            <person name="Smith H.O."/>
            <person name="Venter J.C."/>
            <person name="Fraser C.M."/>
        </authorList>
    </citation>
    <scope>NUCLEOTIDE SEQUENCE [LARGE SCALE GENOMIC DNA]</scope>
    <source>
        <strain>ATCC 43589 / DSM 3109 / JCM 10099 / NBRC 100826 / MSB8</strain>
    </source>
</reference>
<protein>
    <recommendedName>
        <fullName evidence="1">CTP synthase</fullName>
        <ecNumber evidence="1">6.3.4.2</ecNumber>
    </recommendedName>
    <alternativeName>
        <fullName evidence="1">Cytidine 5'-triphosphate synthase</fullName>
    </alternativeName>
    <alternativeName>
        <fullName evidence="1">Cytidine triphosphate synthetase</fullName>
        <shortName evidence="1">CTP synthetase</shortName>
        <shortName evidence="1">CTPS</shortName>
    </alternativeName>
    <alternativeName>
        <fullName evidence="1">UTP--ammonia ligase</fullName>
    </alternativeName>
</protein>
<accession>Q9WZR0</accession>
<feature type="chain" id="PRO_0000138242" description="CTP synthase">
    <location>
        <begin position="1"/>
        <end position="524"/>
    </location>
</feature>
<feature type="domain" description="Glutamine amidotransferase type-1" evidence="1">
    <location>
        <begin position="282"/>
        <end position="524"/>
    </location>
</feature>
<feature type="region of interest" description="Amidoligase domain" evidence="1">
    <location>
        <begin position="1"/>
        <end position="263"/>
    </location>
</feature>
<feature type="active site" description="Nucleophile; for glutamine hydrolysis" evidence="1">
    <location>
        <position position="369"/>
    </location>
</feature>
<feature type="active site" evidence="1">
    <location>
        <position position="499"/>
    </location>
</feature>
<feature type="active site" evidence="1">
    <location>
        <position position="501"/>
    </location>
</feature>
<feature type="binding site" evidence="1">
    <location>
        <position position="13"/>
    </location>
    <ligand>
        <name>CTP</name>
        <dbReference type="ChEBI" id="CHEBI:37563"/>
        <note>allosteric inhibitor</note>
    </ligand>
</feature>
<feature type="binding site" evidence="1">
    <location>
        <position position="13"/>
    </location>
    <ligand>
        <name>UTP</name>
        <dbReference type="ChEBI" id="CHEBI:46398"/>
    </ligand>
</feature>
<feature type="binding site" evidence="1">
    <location>
        <begin position="14"/>
        <end position="19"/>
    </location>
    <ligand>
        <name>ATP</name>
        <dbReference type="ChEBI" id="CHEBI:30616"/>
    </ligand>
</feature>
<feature type="binding site" evidence="1">
    <location>
        <position position="71"/>
    </location>
    <ligand>
        <name>ATP</name>
        <dbReference type="ChEBI" id="CHEBI:30616"/>
    </ligand>
</feature>
<feature type="binding site" evidence="1">
    <location>
        <position position="71"/>
    </location>
    <ligand>
        <name>Mg(2+)</name>
        <dbReference type="ChEBI" id="CHEBI:18420"/>
    </ligand>
</feature>
<feature type="binding site" evidence="1">
    <location>
        <position position="137"/>
    </location>
    <ligand>
        <name>Mg(2+)</name>
        <dbReference type="ChEBI" id="CHEBI:18420"/>
    </ligand>
</feature>
<feature type="binding site" evidence="1">
    <location>
        <begin position="144"/>
        <end position="146"/>
    </location>
    <ligand>
        <name>CTP</name>
        <dbReference type="ChEBI" id="CHEBI:37563"/>
        <note>allosteric inhibitor</note>
    </ligand>
</feature>
<feature type="binding site" evidence="1">
    <location>
        <begin position="184"/>
        <end position="189"/>
    </location>
    <ligand>
        <name>CTP</name>
        <dbReference type="ChEBI" id="CHEBI:37563"/>
        <note>allosteric inhibitor</note>
    </ligand>
</feature>
<feature type="binding site" evidence="1">
    <location>
        <begin position="184"/>
        <end position="189"/>
    </location>
    <ligand>
        <name>UTP</name>
        <dbReference type="ChEBI" id="CHEBI:46398"/>
    </ligand>
</feature>
<feature type="binding site" evidence="1">
    <location>
        <position position="220"/>
    </location>
    <ligand>
        <name>CTP</name>
        <dbReference type="ChEBI" id="CHEBI:37563"/>
        <note>allosteric inhibitor</note>
    </ligand>
</feature>
<feature type="binding site" evidence="1">
    <location>
        <position position="220"/>
    </location>
    <ligand>
        <name>UTP</name>
        <dbReference type="ChEBI" id="CHEBI:46398"/>
    </ligand>
</feature>
<feature type="binding site" evidence="1">
    <location>
        <position position="342"/>
    </location>
    <ligand>
        <name>L-glutamine</name>
        <dbReference type="ChEBI" id="CHEBI:58359"/>
    </ligand>
</feature>
<feature type="binding site" evidence="1">
    <location>
        <begin position="370"/>
        <end position="373"/>
    </location>
    <ligand>
        <name>L-glutamine</name>
        <dbReference type="ChEBI" id="CHEBI:58359"/>
    </ligand>
</feature>
<feature type="binding site" evidence="1">
    <location>
        <position position="393"/>
    </location>
    <ligand>
        <name>L-glutamine</name>
        <dbReference type="ChEBI" id="CHEBI:58359"/>
    </ligand>
</feature>
<feature type="binding site" evidence="1">
    <location>
        <position position="451"/>
    </location>
    <ligand>
        <name>L-glutamine</name>
        <dbReference type="ChEBI" id="CHEBI:58359"/>
    </ligand>
</feature>
<proteinExistence type="inferred from homology"/>
<evidence type="ECO:0000255" key="1">
    <source>
        <dbReference type="HAMAP-Rule" id="MF_01227"/>
    </source>
</evidence>
<name>PYRG_THEMA</name>
<organism>
    <name type="scientific">Thermotoga maritima (strain ATCC 43589 / DSM 3109 / JCM 10099 / NBRC 100826 / MSB8)</name>
    <dbReference type="NCBI Taxonomy" id="243274"/>
    <lineage>
        <taxon>Bacteria</taxon>
        <taxon>Thermotogati</taxon>
        <taxon>Thermotogota</taxon>
        <taxon>Thermotogae</taxon>
        <taxon>Thermotogales</taxon>
        <taxon>Thermotogaceae</taxon>
        <taxon>Thermotoga</taxon>
    </lineage>
</organism>